<name>MIAA_BURMS</name>
<evidence type="ECO:0000255" key="1">
    <source>
        <dbReference type="HAMAP-Rule" id="MF_00185"/>
    </source>
</evidence>
<keyword id="KW-0067">ATP-binding</keyword>
<keyword id="KW-0460">Magnesium</keyword>
<keyword id="KW-0547">Nucleotide-binding</keyword>
<keyword id="KW-0808">Transferase</keyword>
<keyword id="KW-0819">tRNA processing</keyword>
<accession>A1V0V9</accession>
<sequence>MSERNAASARTVACLLGPTASGKTAAALALAARRPIEIVSVDSALVYRGMDIGTAKPTRDERAAVPHHLIDIVDPADAYSAAEFRADALRLVAQIAARGRTPLLAGGTMLYYRALTQGLNDLPAADPDVRATLDADAARDGWPALHARLAGIDPATAARLAPNDSQRIQRALEVYLLTGQPMSALLAAPPRDNDAAAGLRFVPVALEPSERAVLHARIAARFDAMLEAGFIDEVERLRRRDDLHLGLPSMRCVGYRQAWEYLDGCTDYRTMRDKGIFATRQLCKRQLTWLRAMPERIVVDCCAPDATVRAVDALERVLDGRAPA</sequence>
<dbReference type="EC" id="2.5.1.75" evidence="1"/>
<dbReference type="EMBL" id="CP000526">
    <property type="protein sequence ID" value="ABM51038.1"/>
    <property type="molecule type" value="Genomic_DNA"/>
</dbReference>
<dbReference type="RefSeq" id="WP_004194103.1">
    <property type="nucleotide sequence ID" value="NC_008785.1"/>
</dbReference>
<dbReference type="SMR" id="A1V0V9"/>
<dbReference type="GeneID" id="92980007"/>
<dbReference type="KEGG" id="bmv:BMASAVP1_A0513"/>
<dbReference type="HOGENOM" id="CLU_032616_0_0_4"/>
<dbReference type="GO" id="GO:0005524">
    <property type="term" value="F:ATP binding"/>
    <property type="evidence" value="ECO:0007669"/>
    <property type="project" value="UniProtKB-UniRule"/>
</dbReference>
<dbReference type="GO" id="GO:0052381">
    <property type="term" value="F:tRNA dimethylallyltransferase activity"/>
    <property type="evidence" value="ECO:0007669"/>
    <property type="project" value="UniProtKB-UniRule"/>
</dbReference>
<dbReference type="GO" id="GO:0006400">
    <property type="term" value="P:tRNA modification"/>
    <property type="evidence" value="ECO:0007669"/>
    <property type="project" value="TreeGrafter"/>
</dbReference>
<dbReference type="FunFam" id="1.10.20.140:FF:000001">
    <property type="entry name" value="tRNA dimethylallyltransferase"/>
    <property type="match status" value="1"/>
</dbReference>
<dbReference type="Gene3D" id="1.10.20.140">
    <property type="match status" value="1"/>
</dbReference>
<dbReference type="Gene3D" id="3.40.50.300">
    <property type="entry name" value="P-loop containing nucleotide triphosphate hydrolases"/>
    <property type="match status" value="1"/>
</dbReference>
<dbReference type="HAMAP" id="MF_00185">
    <property type="entry name" value="IPP_trans"/>
    <property type="match status" value="1"/>
</dbReference>
<dbReference type="InterPro" id="IPR039657">
    <property type="entry name" value="Dimethylallyltransferase"/>
</dbReference>
<dbReference type="InterPro" id="IPR018022">
    <property type="entry name" value="IPT"/>
</dbReference>
<dbReference type="InterPro" id="IPR027417">
    <property type="entry name" value="P-loop_NTPase"/>
</dbReference>
<dbReference type="NCBIfam" id="TIGR00174">
    <property type="entry name" value="miaA"/>
    <property type="match status" value="1"/>
</dbReference>
<dbReference type="PANTHER" id="PTHR11088">
    <property type="entry name" value="TRNA DIMETHYLALLYLTRANSFERASE"/>
    <property type="match status" value="1"/>
</dbReference>
<dbReference type="PANTHER" id="PTHR11088:SF60">
    <property type="entry name" value="TRNA DIMETHYLALLYLTRANSFERASE"/>
    <property type="match status" value="1"/>
</dbReference>
<dbReference type="Pfam" id="PF01715">
    <property type="entry name" value="IPPT"/>
    <property type="match status" value="1"/>
</dbReference>
<dbReference type="SUPFAM" id="SSF52540">
    <property type="entry name" value="P-loop containing nucleoside triphosphate hydrolases"/>
    <property type="match status" value="2"/>
</dbReference>
<proteinExistence type="inferred from homology"/>
<organism>
    <name type="scientific">Burkholderia mallei (strain SAVP1)</name>
    <dbReference type="NCBI Taxonomy" id="320388"/>
    <lineage>
        <taxon>Bacteria</taxon>
        <taxon>Pseudomonadati</taxon>
        <taxon>Pseudomonadota</taxon>
        <taxon>Betaproteobacteria</taxon>
        <taxon>Burkholderiales</taxon>
        <taxon>Burkholderiaceae</taxon>
        <taxon>Burkholderia</taxon>
        <taxon>pseudomallei group</taxon>
    </lineage>
</organism>
<comment type="function">
    <text evidence="1">Catalyzes the transfer of a dimethylallyl group onto the adenine at position 37 in tRNAs that read codons beginning with uridine, leading to the formation of N6-(dimethylallyl)adenosine (i(6)A).</text>
</comment>
<comment type="catalytic activity">
    <reaction evidence="1">
        <text>adenosine(37) in tRNA + dimethylallyl diphosphate = N(6)-dimethylallyladenosine(37) in tRNA + diphosphate</text>
        <dbReference type="Rhea" id="RHEA:26482"/>
        <dbReference type="Rhea" id="RHEA-COMP:10162"/>
        <dbReference type="Rhea" id="RHEA-COMP:10375"/>
        <dbReference type="ChEBI" id="CHEBI:33019"/>
        <dbReference type="ChEBI" id="CHEBI:57623"/>
        <dbReference type="ChEBI" id="CHEBI:74411"/>
        <dbReference type="ChEBI" id="CHEBI:74415"/>
        <dbReference type="EC" id="2.5.1.75"/>
    </reaction>
</comment>
<comment type="cofactor">
    <cofactor evidence="1">
        <name>Mg(2+)</name>
        <dbReference type="ChEBI" id="CHEBI:18420"/>
    </cofactor>
</comment>
<comment type="subunit">
    <text evidence="1">Monomer.</text>
</comment>
<comment type="similarity">
    <text evidence="1">Belongs to the IPP transferase family.</text>
</comment>
<protein>
    <recommendedName>
        <fullName evidence="1">tRNA dimethylallyltransferase</fullName>
        <ecNumber evidence="1">2.5.1.75</ecNumber>
    </recommendedName>
    <alternativeName>
        <fullName evidence="1">Dimethylallyl diphosphate:tRNA dimethylallyltransferase</fullName>
        <shortName evidence="1">DMAPP:tRNA dimethylallyltransferase</shortName>
        <shortName evidence="1">DMATase</shortName>
    </alternativeName>
    <alternativeName>
        <fullName evidence="1">Isopentenyl-diphosphate:tRNA isopentenyltransferase</fullName>
        <shortName evidence="1">IPP transferase</shortName>
        <shortName evidence="1">IPPT</shortName>
        <shortName evidence="1">IPTase</shortName>
    </alternativeName>
</protein>
<feature type="chain" id="PRO_1000020575" description="tRNA dimethylallyltransferase">
    <location>
        <begin position="1"/>
        <end position="324"/>
    </location>
</feature>
<feature type="region of interest" description="Interaction with substrate tRNA" evidence="1">
    <location>
        <begin position="42"/>
        <end position="45"/>
    </location>
</feature>
<feature type="region of interest" description="Interaction with substrate tRNA" evidence="1">
    <location>
        <begin position="166"/>
        <end position="170"/>
    </location>
</feature>
<feature type="region of interest" description="Interaction with substrate tRNA" evidence="1">
    <location>
        <begin position="251"/>
        <end position="256"/>
    </location>
</feature>
<feature type="binding site" evidence="1">
    <location>
        <begin position="17"/>
        <end position="24"/>
    </location>
    <ligand>
        <name>ATP</name>
        <dbReference type="ChEBI" id="CHEBI:30616"/>
    </ligand>
</feature>
<feature type="binding site" evidence="1">
    <location>
        <begin position="19"/>
        <end position="24"/>
    </location>
    <ligand>
        <name>substrate</name>
    </ligand>
</feature>
<feature type="site" description="Interaction with substrate tRNA" evidence="1">
    <location>
        <position position="108"/>
    </location>
</feature>
<feature type="site" description="Interaction with substrate tRNA" evidence="1">
    <location>
        <position position="130"/>
    </location>
</feature>
<reference key="1">
    <citation type="journal article" date="2010" name="Genome Biol. Evol.">
        <title>Continuing evolution of Burkholderia mallei through genome reduction and large-scale rearrangements.</title>
        <authorList>
            <person name="Losada L."/>
            <person name="Ronning C.M."/>
            <person name="DeShazer D."/>
            <person name="Woods D."/>
            <person name="Fedorova N."/>
            <person name="Kim H.S."/>
            <person name="Shabalina S.A."/>
            <person name="Pearson T.R."/>
            <person name="Brinkac L."/>
            <person name="Tan P."/>
            <person name="Nandi T."/>
            <person name="Crabtree J."/>
            <person name="Badger J."/>
            <person name="Beckstrom-Sternberg S."/>
            <person name="Saqib M."/>
            <person name="Schutzer S.E."/>
            <person name="Keim P."/>
            <person name="Nierman W.C."/>
        </authorList>
    </citation>
    <scope>NUCLEOTIDE SEQUENCE [LARGE SCALE GENOMIC DNA]</scope>
    <source>
        <strain>SAVP1</strain>
    </source>
</reference>
<gene>
    <name evidence="1" type="primary">miaA</name>
    <name type="ordered locus">BMASAVP1_A0513</name>
</gene>